<dbReference type="EC" id="2.4.1.18" evidence="1"/>
<dbReference type="EMBL" id="X69805">
    <property type="protein sequence ID" value="CAA49463.1"/>
    <property type="molecule type" value="mRNA"/>
</dbReference>
<dbReference type="PIR" id="S34730">
    <property type="entry name" value="S34730"/>
</dbReference>
<dbReference type="RefSeq" id="NP_001275183.1">
    <property type="nucleotide sequence ID" value="NM_001288254.1"/>
</dbReference>
<dbReference type="SMR" id="P30924"/>
<dbReference type="FunCoup" id="P30924">
    <property type="interactions" value="2067"/>
</dbReference>
<dbReference type="STRING" id="4113.P30924"/>
<dbReference type="CAZy" id="CBM48">
    <property type="family name" value="Carbohydrate-Binding Module Family 48"/>
</dbReference>
<dbReference type="CAZy" id="GH13">
    <property type="family name" value="Glycoside Hydrolase Family 13"/>
</dbReference>
<dbReference type="PaxDb" id="4113-PGSC0003DMT400025846"/>
<dbReference type="GeneID" id="102596498"/>
<dbReference type="KEGG" id="sot:102596498"/>
<dbReference type="InParanoid" id="P30924"/>
<dbReference type="OrthoDB" id="196493at2759"/>
<dbReference type="BioCyc" id="MetaCyc:MONOMER-1885"/>
<dbReference type="UniPathway" id="UPA00152"/>
<dbReference type="Proteomes" id="UP000011115">
    <property type="component" value="Unassembled WGS sequence"/>
</dbReference>
<dbReference type="ExpressionAtlas" id="P30924">
    <property type="expression patterns" value="baseline and differential"/>
</dbReference>
<dbReference type="GO" id="GO:0009501">
    <property type="term" value="C:amyloplast"/>
    <property type="evidence" value="ECO:0007669"/>
    <property type="project" value="UniProtKB-SubCell"/>
</dbReference>
<dbReference type="GO" id="GO:0009507">
    <property type="term" value="C:chloroplast"/>
    <property type="evidence" value="ECO:0007669"/>
    <property type="project" value="UniProtKB-SubCell"/>
</dbReference>
<dbReference type="GO" id="GO:0005737">
    <property type="term" value="C:cytoplasm"/>
    <property type="evidence" value="ECO:0000318"/>
    <property type="project" value="GO_Central"/>
</dbReference>
<dbReference type="GO" id="GO:0003844">
    <property type="term" value="F:1,4-alpha-glucan branching enzyme activity"/>
    <property type="evidence" value="ECO:0000318"/>
    <property type="project" value="GO_Central"/>
</dbReference>
<dbReference type="GO" id="GO:0043169">
    <property type="term" value="F:cation binding"/>
    <property type="evidence" value="ECO:0007669"/>
    <property type="project" value="InterPro"/>
</dbReference>
<dbReference type="GO" id="GO:0004553">
    <property type="term" value="F:hydrolase activity, hydrolyzing O-glycosyl compounds"/>
    <property type="evidence" value="ECO:0007669"/>
    <property type="project" value="InterPro"/>
</dbReference>
<dbReference type="GO" id="GO:0005975">
    <property type="term" value="P:carbohydrate metabolic process"/>
    <property type="evidence" value="ECO:0000318"/>
    <property type="project" value="GO_Central"/>
</dbReference>
<dbReference type="GO" id="GO:0005978">
    <property type="term" value="P:glycogen biosynthetic process"/>
    <property type="evidence" value="ECO:0007669"/>
    <property type="project" value="InterPro"/>
</dbReference>
<dbReference type="GO" id="GO:0019252">
    <property type="term" value="P:starch biosynthetic process"/>
    <property type="evidence" value="ECO:0007669"/>
    <property type="project" value="UniProtKB-UniPathway"/>
</dbReference>
<dbReference type="CDD" id="cd11321">
    <property type="entry name" value="AmyAc_bac_euk_BE"/>
    <property type="match status" value="1"/>
</dbReference>
<dbReference type="CDD" id="cd02854">
    <property type="entry name" value="E_set_GBE_euk_N"/>
    <property type="match status" value="1"/>
</dbReference>
<dbReference type="FunFam" id="3.20.20.80:FF:000001">
    <property type="entry name" value="1,4-alpha-glucan branching enzyme"/>
    <property type="match status" value="1"/>
</dbReference>
<dbReference type="FunFam" id="2.60.40.10:FF:000250">
    <property type="entry name" value="1,4-alpha-glucan-branching enzyme, chloroplastic/amyloplastic"/>
    <property type="match status" value="1"/>
</dbReference>
<dbReference type="FunFam" id="2.60.40.1180:FF:000003">
    <property type="entry name" value="1,4-alpha-glucan-branching enzyme, chloroplastic/amyloplastic"/>
    <property type="match status" value="1"/>
</dbReference>
<dbReference type="Gene3D" id="3.20.20.80">
    <property type="entry name" value="Glycosidases"/>
    <property type="match status" value="1"/>
</dbReference>
<dbReference type="Gene3D" id="2.60.40.1180">
    <property type="entry name" value="Golgi alpha-mannosidase II"/>
    <property type="match status" value="1"/>
</dbReference>
<dbReference type="Gene3D" id="2.60.40.10">
    <property type="entry name" value="Immunoglobulins"/>
    <property type="match status" value="1"/>
</dbReference>
<dbReference type="InterPro" id="IPR006048">
    <property type="entry name" value="A-amylase/branching_C"/>
</dbReference>
<dbReference type="InterPro" id="IPR037439">
    <property type="entry name" value="Branching_enzy"/>
</dbReference>
<dbReference type="InterPro" id="IPR006047">
    <property type="entry name" value="Glyco_hydro_13_cat_dom"/>
</dbReference>
<dbReference type="InterPro" id="IPR004193">
    <property type="entry name" value="Glyco_hydro_13_N"/>
</dbReference>
<dbReference type="InterPro" id="IPR013780">
    <property type="entry name" value="Glyco_hydro_b"/>
</dbReference>
<dbReference type="InterPro" id="IPR017853">
    <property type="entry name" value="Glycoside_hydrolase_SF"/>
</dbReference>
<dbReference type="InterPro" id="IPR013783">
    <property type="entry name" value="Ig-like_fold"/>
</dbReference>
<dbReference type="InterPro" id="IPR014756">
    <property type="entry name" value="Ig_E-set"/>
</dbReference>
<dbReference type="PANTHER" id="PTHR43651">
    <property type="entry name" value="1,4-ALPHA-GLUCAN-BRANCHING ENZYME"/>
    <property type="match status" value="1"/>
</dbReference>
<dbReference type="PANTHER" id="PTHR43651:SF2">
    <property type="entry name" value="1,4-ALPHA-GLUCAN-BRANCHING ENZYME, CHLOROPLASTIC_AMYLOPLASTIC"/>
    <property type="match status" value="1"/>
</dbReference>
<dbReference type="Pfam" id="PF00128">
    <property type="entry name" value="Alpha-amylase"/>
    <property type="match status" value="1"/>
</dbReference>
<dbReference type="Pfam" id="PF02806">
    <property type="entry name" value="Alpha-amylase_C"/>
    <property type="match status" value="1"/>
</dbReference>
<dbReference type="Pfam" id="PF02922">
    <property type="entry name" value="CBM_48"/>
    <property type="match status" value="1"/>
</dbReference>
<dbReference type="PIRSF" id="PIRSF000463">
    <property type="entry name" value="GlgB"/>
    <property type="match status" value="1"/>
</dbReference>
<dbReference type="SMART" id="SM00642">
    <property type="entry name" value="Aamy"/>
    <property type="match status" value="1"/>
</dbReference>
<dbReference type="SUPFAM" id="SSF51445">
    <property type="entry name" value="(Trans)glycosidases"/>
    <property type="match status" value="1"/>
</dbReference>
<dbReference type="SUPFAM" id="SSF81296">
    <property type="entry name" value="E set domains"/>
    <property type="match status" value="1"/>
</dbReference>
<dbReference type="SUPFAM" id="SSF51011">
    <property type="entry name" value="Glycosyl hydrolase domain"/>
    <property type="match status" value="1"/>
</dbReference>
<organism>
    <name type="scientific">Solanum tuberosum</name>
    <name type="common">Potato</name>
    <dbReference type="NCBI Taxonomy" id="4113"/>
    <lineage>
        <taxon>Eukaryota</taxon>
        <taxon>Viridiplantae</taxon>
        <taxon>Streptophyta</taxon>
        <taxon>Embryophyta</taxon>
        <taxon>Tracheophyta</taxon>
        <taxon>Spermatophyta</taxon>
        <taxon>Magnoliopsida</taxon>
        <taxon>eudicotyledons</taxon>
        <taxon>Gunneridae</taxon>
        <taxon>Pentapetalae</taxon>
        <taxon>asterids</taxon>
        <taxon>lamiids</taxon>
        <taxon>Solanales</taxon>
        <taxon>Solanaceae</taxon>
        <taxon>Solanoideae</taxon>
        <taxon>Solaneae</taxon>
        <taxon>Solanum</taxon>
    </lineage>
</organism>
<keyword id="KW-0035">Amyloplast</keyword>
<keyword id="KW-0150">Chloroplast</keyword>
<keyword id="KW-0328">Glycosyltransferase</keyword>
<keyword id="KW-0934">Plastid</keyword>
<keyword id="KW-1185">Reference proteome</keyword>
<keyword id="KW-0750">Starch biosynthesis</keyword>
<keyword id="KW-0808">Transferase</keyword>
<comment type="function">
    <text>Catalyzes the formation of the alpha-1,6-glucosidic linkages in starch by scission of a 1,4-alpha-linked oligosaccharide from growing alpha-1,4-glucan chains and the subsequent attachment of the oligosaccharide to the alpha-1,6 position.</text>
</comment>
<comment type="catalytic activity">
    <reaction evidence="1">
        <text>Transfers a segment of a (1-&gt;4)-alpha-D-glucan chain to a primary hydroxy group in a similar glucan chain.</text>
        <dbReference type="EC" id="2.4.1.18"/>
    </reaction>
</comment>
<comment type="pathway">
    <text>Glycan biosynthesis; starch biosynthesis.</text>
</comment>
<comment type="subunit">
    <text>Monomer.</text>
</comment>
<comment type="subcellular location">
    <subcellularLocation>
        <location>Plastid</location>
        <location>Chloroplast</location>
    </subcellularLocation>
    <subcellularLocation>
        <location>Plastid</location>
        <location>Amyloplast</location>
    </subcellularLocation>
</comment>
<comment type="similarity">
    <text evidence="3">Belongs to the glycosyl hydrolase 13 family. GlgB subfamily.</text>
</comment>
<sequence>MEINFKVLSKPIRGSFPSFSPKVSSGASRNKICFPSQHSTGLKFGSQERSWDISSTPKSRVRKDERMKHSSAISAVLTDDNSTMAPLEEDVKTENIGLLNLDPTLEPYLDHFRHRMKRYVDQKMLIEKYEGPLEEFAQGYLKFGFNREDGCIVYREWAPAAQEDEVIGDFNGWNGSNHMMEKDQFGVWSIRIPDVDSKPVIPHNSRVKFRFKHGNGVWVDRIPAWIKYATADATKFAAPYDGVYWDPPPSERYHFKYPRPPKPRAPRIYEAHVGMSSSEPRVNSYREFADDVLPRIKANNYNTVQLMAIMEHSYYGSFGYHVTNFFAVSSRYGNPEDLKYLIDKAHSLGLQVLVDVVHSHASNNVTDGLNGFDIGQGSQESYFHAGERGYHKLWDSRLFNYANWEVLRFLLSNLRWWLEEYNFDGFRFDGITSMLYVHHGINMGFTGNYNEYFSEATDVDAVVYLMLANNLIHKIFPDATVIAEDVSGMPGLGRPVSEGGIGFDYRLAMAIPDKWIDYLKNKNDEDWSMKEVTSSLTNRRYTEKCIAYAESHDQSIVGDKTIAFLLMDKEMYSGMSCLTDASPVVDRGIALHKMIHFFTMALGGEGYLNFMGNEFGHPEWIDFPREGNNWSYDKCRRQWNLADSEHLRYKFMNAFDRAMNSLDEKFSFLASGKQIVSSMDDDNKVVVFERGDLVFVFNFHPKNTYEGYKVGCDLPGKYRVALDSDAWEFGGHGRTGHDVDHFTSPEGIPGVPETNFNGRQIPSKCCLLREHVWLITELMNACQKLKITRQTFVVSYYQQPISRRVTRNLKIRYLQISVTLTNACQKLKFTRQTFLVSYYQQPILRRVTRKLKDSLSTNIST</sequence>
<evidence type="ECO:0000250" key="1">
    <source>
        <dbReference type="UniProtKB" id="Q04446"/>
    </source>
</evidence>
<evidence type="ECO:0000250" key="2">
    <source>
        <dbReference type="UniProtKB" id="Q6FJV0"/>
    </source>
</evidence>
<evidence type="ECO:0000305" key="3"/>
<gene>
    <name type="primary">SBE1</name>
    <name type="synonym">SBE</name>
</gene>
<feature type="chain" id="PRO_0000188787" description="1,4-alpha-glucan-branching enzyme">
    <location>
        <begin position="1"/>
        <end position="861"/>
    </location>
</feature>
<feature type="active site" description="Nucleophile" evidence="1">
    <location>
        <position position="429"/>
    </location>
</feature>
<feature type="active site" description="Proton donor" evidence="1">
    <location>
        <position position="484"/>
    </location>
</feature>
<feature type="binding site" evidence="2">
    <location>
        <position position="173"/>
    </location>
    <ligand>
        <name>(1,4-alpha-D-glucosyl)n</name>
        <dbReference type="ChEBI" id="CHEBI:15444"/>
    </ligand>
</feature>
<feature type="binding site" evidence="2">
    <location>
        <position position="208"/>
    </location>
    <ligand>
        <name>(1,4-alpha-D-glucosyl)n</name>
        <dbReference type="ChEBI" id="CHEBI:15444"/>
    </ligand>
</feature>
<feature type="site" description="Transition state stabilizer" evidence="1">
    <location>
        <position position="553"/>
    </location>
</feature>
<reference key="1">
    <citation type="journal article" date="1993" name="Plant Physiol.">
        <title>Starch branching enzyme cDNA from Solanum tuberosum.</title>
        <authorList>
            <person name="Poulsen P."/>
            <person name="Kreiberg J.D."/>
        </authorList>
    </citation>
    <scope>NUCLEOTIDE SEQUENCE [MRNA]</scope>
    <source>
        <strain>cv. Dianella</strain>
    </source>
</reference>
<reference key="2">
    <citation type="journal article" date="1991" name="Mol. Gen. Genet.">
        <title>Cloning and expression analysis of a potato cDNA that encodes branching enzyme: evidence for co-expression of starch biosynthetic genes.</title>
        <authorList>
            <person name="Kossmann J."/>
            <person name="Visser R.G.F."/>
            <person name="Mueller-Roeber B."/>
            <person name="Willmitzer L."/>
            <person name="Sonnewald U."/>
        </authorList>
    </citation>
    <scope>NUCLEOTIDE SEQUENCE [MRNA] OF 279-527</scope>
    <source>
        <strain>cv. Desiree</strain>
        <tissue>Tuber</tissue>
    </source>
</reference>
<accession>P30924</accession>
<name>GLGB_SOLTU</name>
<protein>
    <recommendedName>
        <fullName>1,4-alpha-glucan-branching enzyme</fullName>
        <ecNumber evidence="1">2.4.1.18</ecNumber>
    </recommendedName>
    <alternativeName>
        <fullName>Q-enzyme</fullName>
    </alternativeName>
    <alternativeName>
        <fullName>Starch-branching enzyme</fullName>
    </alternativeName>
</protein>
<proteinExistence type="evidence at transcript level"/>